<evidence type="ECO:0000250" key="1">
    <source>
        <dbReference type="UniProtKB" id="E7EKC4"/>
    </source>
</evidence>
<evidence type="ECO:0000255" key="2"/>
<evidence type="ECO:0000269" key="3">
    <source>
    </source>
</evidence>
<evidence type="ECO:0000303" key="4">
    <source>
    </source>
</evidence>
<evidence type="ECO:0000305" key="5">
    <source>
    </source>
</evidence>
<evidence type="ECO:0000312" key="6">
    <source>
        <dbReference type="EMBL" id="ADV36172.1"/>
    </source>
</evidence>
<name>BR12_SYLSP</name>
<dbReference type="EMBL" id="HQ735149">
    <property type="protein sequence ID" value="ADV36172.1"/>
    <property type="molecule type" value="mRNA"/>
</dbReference>
<dbReference type="GO" id="GO:0005576">
    <property type="term" value="C:extracellular region"/>
    <property type="evidence" value="ECO:0007669"/>
    <property type="project" value="UniProtKB-SubCell"/>
</dbReference>
<dbReference type="GO" id="GO:0050832">
    <property type="term" value="P:defense response to fungus"/>
    <property type="evidence" value="ECO:0000314"/>
    <property type="project" value="UniProtKB"/>
</dbReference>
<dbReference type="GO" id="GO:0050829">
    <property type="term" value="P:defense response to Gram-negative bacterium"/>
    <property type="evidence" value="ECO:0000314"/>
    <property type="project" value="UniProtKB"/>
</dbReference>
<dbReference type="GO" id="GO:0050830">
    <property type="term" value="P:defense response to Gram-positive bacterium"/>
    <property type="evidence" value="ECO:0000314"/>
    <property type="project" value="UniProtKB"/>
</dbReference>
<dbReference type="GO" id="GO:0044179">
    <property type="term" value="P:hemolysis in another organism"/>
    <property type="evidence" value="ECO:0000314"/>
    <property type="project" value="UniProtKB"/>
</dbReference>
<dbReference type="InterPro" id="IPR012520">
    <property type="entry name" value="Antimicrobial_frog_1"/>
</dbReference>
<dbReference type="InterPro" id="IPR004275">
    <property type="entry name" value="Frog_antimicrobial_propeptide"/>
</dbReference>
<dbReference type="Pfam" id="PF08018">
    <property type="entry name" value="Antimicrobial_1"/>
    <property type="match status" value="1"/>
</dbReference>
<dbReference type="Pfam" id="PF03032">
    <property type="entry name" value="FSAP_sig_propep"/>
    <property type="match status" value="1"/>
</dbReference>
<keyword id="KW-0878">Amphibian defense peptide</keyword>
<keyword id="KW-0044">Antibiotic</keyword>
<keyword id="KW-0929">Antimicrobial</keyword>
<keyword id="KW-0165">Cleavage on pair of basic residues</keyword>
<keyword id="KW-0204">Cytolysis</keyword>
<keyword id="KW-0903">Direct protein sequencing</keyword>
<keyword id="KW-1015">Disulfide bond</keyword>
<keyword id="KW-0295">Fungicide</keyword>
<keyword id="KW-0354">Hemolysis</keyword>
<keyword id="KW-0964">Secreted</keyword>
<keyword id="KW-0732">Signal</keyword>
<protein>
    <recommendedName>
        <fullName evidence="4">Brevinin-1SN2</fullName>
    </recommendedName>
</protein>
<accession>E7EKH2</accession>
<feature type="signal peptide" evidence="2">
    <location>
        <begin position="1"/>
        <end position="22"/>
    </location>
</feature>
<feature type="propeptide" id="PRO_0000439770" description="Removed in mature form" evidence="5">
    <location>
        <begin position="23"/>
        <end position="45"/>
    </location>
</feature>
<feature type="peptide" id="PRO_0000439771" description="Brevinin-1SN2" evidence="3">
    <location>
        <begin position="48"/>
        <end position="71"/>
    </location>
</feature>
<feature type="disulfide bond" evidence="1">
    <location>
        <begin position="65"/>
        <end position="71"/>
    </location>
</feature>
<organism evidence="4">
    <name type="scientific">Sylvirana spinulosa</name>
    <name type="common">Fine-spined frog</name>
    <name type="synonym">Hylarana spinulosa</name>
    <dbReference type="NCBI Taxonomy" id="369515"/>
    <lineage>
        <taxon>Eukaryota</taxon>
        <taxon>Metazoa</taxon>
        <taxon>Chordata</taxon>
        <taxon>Craniata</taxon>
        <taxon>Vertebrata</taxon>
        <taxon>Euteleostomi</taxon>
        <taxon>Amphibia</taxon>
        <taxon>Batrachia</taxon>
        <taxon>Anura</taxon>
        <taxon>Neobatrachia</taxon>
        <taxon>Ranoidea</taxon>
        <taxon>Ranidae</taxon>
        <taxon>Sylvirana</taxon>
    </lineage>
</organism>
<reference evidence="6" key="1">
    <citation type="journal article" date="2013" name="Biochimie">
        <title>Identification of multiple antimicrobial peptides from the skin of fine-spined frog, Hylarana spinulosa (Ranidae).</title>
        <authorList>
            <person name="Yang X."/>
            <person name="Hu Y."/>
            <person name="Xu S."/>
            <person name="Hu Y."/>
            <person name="Meng H."/>
            <person name="Guo C."/>
            <person name="Liu Y."/>
            <person name="Liu J."/>
            <person name="Yu Z."/>
            <person name="Wang H."/>
        </authorList>
    </citation>
    <scope>NUCLEOTIDE SEQUENCE [MRNA]</scope>
    <scope>PROTEIN SEQUENCE OF 48-71</scope>
    <scope>FUNCTION</scope>
    <scope>SYNTHESIS</scope>
    <scope>IDENTIFICATION BY MASS SPECTROMETRY</scope>
    <source>
        <tissue evidence="4">Skin</tissue>
    </source>
</reference>
<sequence>MFTMKKSLLLIFFLGTINLSLCEEERNADEDEKRDGDDESDVEVQKRFMGTALKIAANVLPAAFCKIFKKC</sequence>
<comment type="function">
    <text evidence="3">Antimicrobial peptide. Active against a variety of Gram-negative and Gram-positive bacterial strains. Active against fungus C.glabrata 090902 and C.albicans ATCC 10231. Shows hemolytic activity against human erythrocytes.</text>
</comment>
<comment type="subcellular location">
    <subcellularLocation>
        <location evidence="5">Secreted</location>
    </subcellularLocation>
</comment>
<comment type="tissue specificity">
    <text evidence="5">Expressed by the skin glands.</text>
</comment>
<comment type="similarity">
    <text evidence="2">Belongs to the frog skin active peptide (FSAP) family. Brevinin subfamily.</text>
</comment>
<proteinExistence type="evidence at protein level"/>